<reference key="1">
    <citation type="journal article" date="2010" name="Genome Biol.">
        <title>A first genome assembly of the barley fungal pathogen Pyrenophora teres f. teres.</title>
        <authorList>
            <person name="Ellwood S.R."/>
            <person name="Liu Z."/>
            <person name="Syme R.A."/>
            <person name="Lai Z."/>
            <person name="Hane J.K."/>
            <person name="Keiper F."/>
            <person name="Moffat C.S."/>
            <person name="Oliver R.P."/>
            <person name="Friesen T.L."/>
        </authorList>
    </citation>
    <scope>NUCLEOTIDE SEQUENCE [LARGE SCALE GENOMIC DNA]</scope>
    <source>
        <strain>0-1</strain>
    </source>
</reference>
<protein>
    <recommendedName>
        <fullName>Probable Xaa-Pro aminopeptidase pepP</fullName>
        <ecNumber>3.4.11.9</ecNumber>
    </recommendedName>
    <alternativeName>
        <fullName>Aminoacylproline aminopeptidase</fullName>
    </alternativeName>
    <alternativeName>
        <fullName>Prolidase</fullName>
    </alternativeName>
</protein>
<sequence length="463" mass="52011">MAIAENYEDVLKGKYPAKAHAKKVAEWIIAKGGDKNGTIYLEAQKQKLNEDNDGEAPFRQRRYFFYLSGCELPDSYLTYEIATEKLTLFIPPVEPDEVIWSGLPMSPEDAKAKYDIDHCLTTKDVNAHLTSTSESAQSTIYAIPEQVSDHVTFISYKEKEFKQLKPAIEYCRVTKSDYEIALIRKANMISTAAHEAVMKAASTAKNECELEAVFLKACVERNAKNQAYHSIVAAGEHAATLHYVHNAAPISDQNLLLLDAGCEVDCYASDITRTFPLKGKFTAESLAIYKIVLDMQHQCINALKEGVVWDSVHELAHKVAIKGLLELGILKGDAEEIFTKRISVAFFPHGLGHYLGMDTHDTGGNANYADKDVMFRYLRTRGSLPERSVITVEPGVYFCRFIIEPYLKDEEKKKYIDESVLERYWSVGGVRIEDNVLVTKNGFENLTPTPKEIDDITKLILST</sequence>
<feature type="chain" id="PRO_0000411887" description="Probable Xaa-Pro aminopeptidase pepP">
    <location>
        <begin position="1"/>
        <end position="463"/>
    </location>
</feature>
<feature type="binding site" evidence="1">
    <location>
        <position position="259"/>
    </location>
    <ligand>
        <name>Mn(2+)</name>
        <dbReference type="ChEBI" id="CHEBI:29035"/>
        <label>2</label>
    </ligand>
</feature>
<feature type="binding site" evidence="1">
    <location>
        <position position="270"/>
    </location>
    <ligand>
        <name>Mn(2+)</name>
        <dbReference type="ChEBI" id="CHEBI:29035"/>
        <label>1</label>
    </ligand>
</feature>
<feature type="binding site" evidence="1">
    <location>
        <position position="270"/>
    </location>
    <ligand>
        <name>Mn(2+)</name>
        <dbReference type="ChEBI" id="CHEBI:29035"/>
        <label>2</label>
    </ligand>
</feature>
<feature type="binding site" evidence="1">
    <location>
        <position position="393"/>
    </location>
    <ligand>
        <name>Mn(2+)</name>
        <dbReference type="ChEBI" id="CHEBI:29035"/>
        <label>1</label>
    </ligand>
</feature>
<feature type="binding site" evidence="1">
    <location>
        <position position="433"/>
    </location>
    <ligand>
        <name>Mn(2+)</name>
        <dbReference type="ChEBI" id="CHEBI:29035"/>
        <label>1</label>
    </ligand>
</feature>
<feature type="binding site" evidence="1">
    <location>
        <position position="433"/>
    </location>
    <ligand>
        <name>Mn(2+)</name>
        <dbReference type="ChEBI" id="CHEBI:29035"/>
        <label>2</label>
    </ligand>
</feature>
<name>AMPP3_PYRTT</name>
<evidence type="ECO:0000250" key="1"/>
<evidence type="ECO:0000305" key="2"/>
<organism>
    <name type="scientific">Pyrenophora teres f. teres (strain 0-1)</name>
    <name type="common">Barley net blotch fungus</name>
    <name type="synonym">Drechslera teres f. teres</name>
    <dbReference type="NCBI Taxonomy" id="861557"/>
    <lineage>
        <taxon>Eukaryota</taxon>
        <taxon>Fungi</taxon>
        <taxon>Dikarya</taxon>
        <taxon>Ascomycota</taxon>
        <taxon>Pezizomycotina</taxon>
        <taxon>Dothideomycetes</taxon>
        <taxon>Pleosporomycetidae</taxon>
        <taxon>Pleosporales</taxon>
        <taxon>Pleosporineae</taxon>
        <taxon>Pleosporaceae</taxon>
        <taxon>Pyrenophora</taxon>
    </lineage>
</organism>
<comment type="function">
    <text evidence="1">Catalyzes the removal of a penultimate prolyl residue from the N-termini of peptides.</text>
</comment>
<comment type="catalytic activity">
    <reaction>
        <text>Release of any N-terminal amino acid, including proline, that is linked to proline, even from a dipeptide or tripeptide.</text>
        <dbReference type="EC" id="3.4.11.9"/>
    </reaction>
</comment>
<comment type="cofactor">
    <cofactor evidence="1">
        <name>Mn(2+)</name>
        <dbReference type="ChEBI" id="CHEBI:29035"/>
    </cofactor>
    <text evidence="1">Binds 2 manganese ions per subunit.</text>
</comment>
<comment type="similarity">
    <text evidence="2">Belongs to the peptidase M24B family.</text>
</comment>
<proteinExistence type="inferred from homology"/>
<gene>
    <name type="primary">pepP</name>
    <name type="ORF">PTT_18417</name>
</gene>
<keyword id="KW-0031">Aminopeptidase</keyword>
<keyword id="KW-0378">Hydrolase</keyword>
<keyword id="KW-0464">Manganese</keyword>
<keyword id="KW-0479">Metal-binding</keyword>
<keyword id="KW-0482">Metalloprotease</keyword>
<keyword id="KW-0645">Protease</keyword>
<keyword id="KW-1185">Reference proteome</keyword>
<accession>E3S6N7</accession>
<dbReference type="EC" id="3.4.11.9"/>
<dbReference type="EMBL" id="GL537441">
    <property type="protein sequence ID" value="EFQ86352.1"/>
    <property type="molecule type" value="Genomic_DNA"/>
</dbReference>
<dbReference type="RefSeq" id="XP_003305542.1">
    <property type="nucleotide sequence ID" value="XM_003305494.1"/>
</dbReference>
<dbReference type="SMR" id="E3S6N7"/>
<dbReference type="STRING" id="861557.E3S6N7"/>
<dbReference type="EnsemblFungi" id="EFQ86352">
    <property type="protein sequence ID" value="EFQ86352"/>
    <property type="gene ID" value="PTT_18417"/>
</dbReference>
<dbReference type="KEGG" id="pte:PTT_18417"/>
<dbReference type="eggNOG" id="KOG2737">
    <property type="taxonomic scope" value="Eukaryota"/>
</dbReference>
<dbReference type="HOGENOM" id="CLU_017266_1_2_1"/>
<dbReference type="OrthoDB" id="10261878at2759"/>
<dbReference type="Proteomes" id="UP000001067">
    <property type="component" value="Unassembled WGS sequence"/>
</dbReference>
<dbReference type="GO" id="GO:0030145">
    <property type="term" value="F:manganese ion binding"/>
    <property type="evidence" value="ECO:0007669"/>
    <property type="project" value="InterPro"/>
</dbReference>
<dbReference type="GO" id="GO:0070006">
    <property type="term" value="F:metalloaminopeptidase activity"/>
    <property type="evidence" value="ECO:0007669"/>
    <property type="project" value="InterPro"/>
</dbReference>
<dbReference type="GO" id="GO:0006508">
    <property type="term" value="P:proteolysis"/>
    <property type="evidence" value="ECO:0007669"/>
    <property type="project" value="UniProtKB-KW"/>
</dbReference>
<dbReference type="CDD" id="cd01087">
    <property type="entry name" value="Prolidase"/>
    <property type="match status" value="1"/>
</dbReference>
<dbReference type="FunFam" id="3.90.230.10:FF:000002">
    <property type="entry name" value="Xaa-Pro aminopeptidase 3"/>
    <property type="match status" value="1"/>
</dbReference>
<dbReference type="Gene3D" id="3.90.230.10">
    <property type="entry name" value="Creatinase/methionine aminopeptidase superfamily"/>
    <property type="match status" value="1"/>
</dbReference>
<dbReference type="Gene3D" id="3.40.350.10">
    <property type="entry name" value="Creatinase/prolidase N-terminal domain"/>
    <property type="match status" value="1"/>
</dbReference>
<dbReference type="InterPro" id="IPR007865">
    <property type="entry name" value="Aminopep_P_N"/>
</dbReference>
<dbReference type="InterPro" id="IPR029149">
    <property type="entry name" value="Creatin/AminoP/Spt16_N"/>
</dbReference>
<dbReference type="InterPro" id="IPR036005">
    <property type="entry name" value="Creatinase/aminopeptidase-like"/>
</dbReference>
<dbReference type="InterPro" id="IPR000994">
    <property type="entry name" value="Pept_M24"/>
</dbReference>
<dbReference type="InterPro" id="IPR052433">
    <property type="entry name" value="X-Pro_dipept-like"/>
</dbReference>
<dbReference type="PANTHER" id="PTHR43226">
    <property type="entry name" value="XAA-PRO AMINOPEPTIDASE 3"/>
    <property type="match status" value="1"/>
</dbReference>
<dbReference type="PANTHER" id="PTHR43226:SF1">
    <property type="entry name" value="XAA-PRO DIPEPTIDASE"/>
    <property type="match status" value="1"/>
</dbReference>
<dbReference type="Pfam" id="PF05195">
    <property type="entry name" value="AMP_N"/>
    <property type="match status" value="1"/>
</dbReference>
<dbReference type="Pfam" id="PF00557">
    <property type="entry name" value="Peptidase_M24"/>
    <property type="match status" value="1"/>
</dbReference>
<dbReference type="SMART" id="SM01011">
    <property type="entry name" value="AMP_N"/>
    <property type="match status" value="1"/>
</dbReference>
<dbReference type="SUPFAM" id="SSF55920">
    <property type="entry name" value="Creatinase/aminopeptidase"/>
    <property type="match status" value="1"/>
</dbReference>
<dbReference type="SUPFAM" id="SSF53092">
    <property type="entry name" value="Creatinase/prolidase N-terminal domain"/>
    <property type="match status" value="1"/>
</dbReference>